<name>END4_CARHZ</name>
<evidence type="ECO:0000255" key="1">
    <source>
        <dbReference type="HAMAP-Rule" id="MF_00152"/>
    </source>
</evidence>
<protein>
    <recommendedName>
        <fullName evidence="1">Probable endonuclease 4</fullName>
        <ecNumber evidence="1">3.1.21.2</ecNumber>
    </recommendedName>
    <alternativeName>
        <fullName evidence="1">Endodeoxyribonuclease IV</fullName>
    </alternativeName>
    <alternativeName>
        <fullName evidence="1">Endonuclease IV</fullName>
    </alternativeName>
</protein>
<gene>
    <name evidence="1" type="primary">nfo</name>
    <name type="ordered locus">CHY_1757</name>
</gene>
<accession>Q3ABA7</accession>
<sequence length="283" mass="32142">MNVGLHLSIAGGLLKLKERIIKNKTEGVQIFSRSPRGGEAKPFNEKELKGFLEFKEEYKLYPLVVHVPYVMNLASPEEEMFQKSVAMIREDLYRSDQLHADFLVVHVGSHRGAGEERGLARMVEGLKILLSENFKTRILIENTAGSGNEMGYSLDHLAYIISETGHEELGICLDTCHLLAAGYDDVSPEGISAFSREFREKIGEERFCLLHVNDSKHPIGSRKDRHENLEQGYIGREGFINLLNSPFFKRVPWILETPEPGIEEDLVKLKKLREEVLKIPADR</sequence>
<reference key="1">
    <citation type="journal article" date="2005" name="PLoS Genet.">
        <title>Life in hot carbon monoxide: the complete genome sequence of Carboxydothermus hydrogenoformans Z-2901.</title>
        <authorList>
            <person name="Wu M."/>
            <person name="Ren Q."/>
            <person name="Durkin A.S."/>
            <person name="Daugherty S.C."/>
            <person name="Brinkac L.M."/>
            <person name="Dodson R.J."/>
            <person name="Madupu R."/>
            <person name="Sullivan S.A."/>
            <person name="Kolonay J.F."/>
            <person name="Nelson W.C."/>
            <person name="Tallon L.J."/>
            <person name="Jones K.M."/>
            <person name="Ulrich L.E."/>
            <person name="Gonzalez J.M."/>
            <person name="Zhulin I.B."/>
            <person name="Robb F.T."/>
            <person name="Eisen J.A."/>
        </authorList>
    </citation>
    <scope>NUCLEOTIDE SEQUENCE [LARGE SCALE GENOMIC DNA]</scope>
    <source>
        <strain>ATCC BAA-161 / DSM 6008 / Z-2901</strain>
    </source>
</reference>
<comment type="function">
    <text evidence="1">Endonuclease IV plays a role in DNA repair. It cleaves phosphodiester bonds at apurinic or apyrimidinic (AP) sites, generating a 3'-hydroxyl group and a 5'-terminal sugar phosphate.</text>
</comment>
<comment type="catalytic activity">
    <reaction evidence="1">
        <text>Endonucleolytic cleavage to 5'-phosphooligonucleotide end-products.</text>
        <dbReference type="EC" id="3.1.21.2"/>
    </reaction>
</comment>
<comment type="cofactor">
    <cofactor evidence="1">
        <name>Zn(2+)</name>
        <dbReference type="ChEBI" id="CHEBI:29105"/>
    </cofactor>
    <text evidence="1">Binds 3 Zn(2+) ions.</text>
</comment>
<comment type="similarity">
    <text evidence="1">Belongs to the AP endonuclease 2 family.</text>
</comment>
<proteinExistence type="inferred from homology"/>
<feature type="chain" id="PRO_1000058173" description="Probable endonuclease 4">
    <location>
        <begin position="1"/>
        <end position="283"/>
    </location>
</feature>
<feature type="binding site" evidence="1">
    <location>
        <position position="66"/>
    </location>
    <ligand>
        <name>Zn(2+)</name>
        <dbReference type="ChEBI" id="CHEBI:29105"/>
        <label>1</label>
    </ligand>
</feature>
<feature type="binding site" evidence="1">
    <location>
        <position position="106"/>
    </location>
    <ligand>
        <name>Zn(2+)</name>
        <dbReference type="ChEBI" id="CHEBI:29105"/>
        <label>1</label>
    </ligand>
</feature>
<feature type="binding site" evidence="1">
    <location>
        <position position="141"/>
    </location>
    <ligand>
        <name>Zn(2+)</name>
        <dbReference type="ChEBI" id="CHEBI:29105"/>
        <label>1</label>
    </ligand>
</feature>
<feature type="binding site" evidence="1">
    <location>
        <position position="141"/>
    </location>
    <ligand>
        <name>Zn(2+)</name>
        <dbReference type="ChEBI" id="CHEBI:29105"/>
        <label>2</label>
    </ligand>
</feature>
<feature type="binding site" evidence="1">
    <location>
        <position position="174"/>
    </location>
    <ligand>
        <name>Zn(2+)</name>
        <dbReference type="ChEBI" id="CHEBI:29105"/>
        <label>2</label>
    </ligand>
</feature>
<feature type="binding site" evidence="1">
    <location>
        <position position="177"/>
    </location>
    <ligand>
        <name>Zn(2+)</name>
        <dbReference type="ChEBI" id="CHEBI:29105"/>
        <label>3</label>
    </ligand>
</feature>
<feature type="binding site" evidence="1">
    <location>
        <position position="211"/>
    </location>
    <ligand>
        <name>Zn(2+)</name>
        <dbReference type="ChEBI" id="CHEBI:29105"/>
        <label>2</label>
    </ligand>
</feature>
<feature type="binding site" evidence="1">
    <location>
        <position position="224"/>
    </location>
    <ligand>
        <name>Zn(2+)</name>
        <dbReference type="ChEBI" id="CHEBI:29105"/>
        <label>3</label>
    </ligand>
</feature>
<feature type="binding site" evidence="1">
    <location>
        <position position="226"/>
    </location>
    <ligand>
        <name>Zn(2+)</name>
        <dbReference type="ChEBI" id="CHEBI:29105"/>
        <label>3</label>
    </ligand>
</feature>
<feature type="binding site" evidence="1">
    <location>
        <position position="256"/>
    </location>
    <ligand>
        <name>Zn(2+)</name>
        <dbReference type="ChEBI" id="CHEBI:29105"/>
        <label>2</label>
    </ligand>
</feature>
<dbReference type="EC" id="3.1.21.2" evidence="1"/>
<dbReference type="EMBL" id="CP000141">
    <property type="protein sequence ID" value="ABB15041.1"/>
    <property type="molecule type" value="Genomic_DNA"/>
</dbReference>
<dbReference type="RefSeq" id="WP_011344651.1">
    <property type="nucleotide sequence ID" value="NC_007503.1"/>
</dbReference>
<dbReference type="SMR" id="Q3ABA7"/>
<dbReference type="FunCoup" id="Q3ABA7">
    <property type="interactions" value="133"/>
</dbReference>
<dbReference type="STRING" id="246194.CHY_1757"/>
<dbReference type="KEGG" id="chy:CHY_1757"/>
<dbReference type="eggNOG" id="COG0648">
    <property type="taxonomic scope" value="Bacteria"/>
</dbReference>
<dbReference type="HOGENOM" id="CLU_025885_0_1_9"/>
<dbReference type="InParanoid" id="Q3ABA7"/>
<dbReference type="OrthoDB" id="9805666at2"/>
<dbReference type="Proteomes" id="UP000002706">
    <property type="component" value="Chromosome"/>
</dbReference>
<dbReference type="GO" id="GO:0008833">
    <property type="term" value="F:deoxyribonuclease IV (phage-T4-induced) activity"/>
    <property type="evidence" value="ECO:0007669"/>
    <property type="project" value="UniProtKB-UniRule"/>
</dbReference>
<dbReference type="GO" id="GO:0003677">
    <property type="term" value="F:DNA binding"/>
    <property type="evidence" value="ECO:0007669"/>
    <property type="project" value="InterPro"/>
</dbReference>
<dbReference type="GO" id="GO:0003906">
    <property type="term" value="F:DNA-(apurinic or apyrimidinic site) endonuclease activity"/>
    <property type="evidence" value="ECO:0007669"/>
    <property type="project" value="TreeGrafter"/>
</dbReference>
<dbReference type="GO" id="GO:0008081">
    <property type="term" value="F:phosphoric diester hydrolase activity"/>
    <property type="evidence" value="ECO:0007669"/>
    <property type="project" value="TreeGrafter"/>
</dbReference>
<dbReference type="GO" id="GO:0008270">
    <property type="term" value="F:zinc ion binding"/>
    <property type="evidence" value="ECO:0007669"/>
    <property type="project" value="UniProtKB-UniRule"/>
</dbReference>
<dbReference type="GO" id="GO:0006284">
    <property type="term" value="P:base-excision repair"/>
    <property type="evidence" value="ECO:0007669"/>
    <property type="project" value="TreeGrafter"/>
</dbReference>
<dbReference type="CDD" id="cd00019">
    <property type="entry name" value="AP2Ec"/>
    <property type="match status" value="1"/>
</dbReference>
<dbReference type="FunFam" id="3.20.20.150:FF:000001">
    <property type="entry name" value="Probable endonuclease 4"/>
    <property type="match status" value="1"/>
</dbReference>
<dbReference type="Gene3D" id="3.20.20.150">
    <property type="entry name" value="Divalent-metal-dependent TIM barrel enzymes"/>
    <property type="match status" value="1"/>
</dbReference>
<dbReference type="HAMAP" id="MF_00152">
    <property type="entry name" value="Nfo"/>
    <property type="match status" value="1"/>
</dbReference>
<dbReference type="InterPro" id="IPR001719">
    <property type="entry name" value="AP_endonuc_2"/>
</dbReference>
<dbReference type="InterPro" id="IPR018246">
    <property type="entry name" value="AP_endonuc_F2_Zn_BS"/>
</dbReference>
<dbReference type="InterPro" id="IPR036237">
    <property type="entry name" value="Xyl_isomerase-like_sf"/>
</dbReference>
<dbReference type="InterPro" id="IPR013022">
    <property type="entry name" value="Xyl_isomerase-like_TIM-brl"/>
</dbReference>
<dbReference type="NCBIfam" id="TIGR00587">
    <property type="entry name" value="nfo"/>
    <property type="match status" value="1"/>
</dbReference>
<dbReference type="PANTHER" id="PTHR21445:SF0">
    <property type="entry name" value="APURINIC-APYRIMIDINIC ENDONUCLEASE"/>
    <property type="match status" value="1"/>
</dbReference>
<dbReference type="PANTHER" id="PTHR21445">
    <property type="entry name" value="ENDONUCLEASE IV ENDODEOXYRIBONUCLEASE IV"/>
    <property type="match status" value="1"/>
</dbReference>
<dbReference type="Pfam" id="PF01261">
    <property type="entry name" value="AP_endonuc_2"/>
    <property type="match status" value="1"/>
</dbReference>
<dbReference type="SMART" id="SM00518">
    <property type="entry name" value="AP2Ec"/>
    <property type="match status" value="1"/>
</dbReference>
<dbReference type="SUPFAM" id="SSF51658">
    <property type="entry name" value="Xylose isomerase-like"/>
    <property type="match status" value="1"/>
</dbReference>
<dbReference type="PROSITE" id="PS00730">
    <property type="entry name" value="AP_NUCLEASE_F2_2"/>
    <property type="match status" value="1"/>
</dbReference>
<dbReference type="PROSITE" id="PS00731">
    <property type="entry name" value="AP_NUCLEASE_F2_3"/>
    <property type="match status" value="1"/>
</dbReference>
<dbReference type="PROSITE" id="PS51432">
    <property type="entry name" value="AP_NUCLEASE_F2_4"/>
    <property type="match status" value="1"/>
</dbReference>
<organism>
    <name type="scientific">Carboxydothermus hydrogenoformans (strain ATCC BAA-161 / DSM 6008 / Z-2901)</name>
    <dbReference type="NCBI Taxonomy" id="246194"/>
    <lineage>
        <taxon>Bacteria</taxon>
        <taxon>Bacillati</taxon>
        <taxon>Bacillota</taxon>
        <taxon>Clostridia</taxon>
        <taxon>Thermoanaerobacterales</taxon>
        <taxon>Thermoanaerobacteraceae</taxon>
        <taxon>Carboxydothermus</taxon>
    </lineage>
</organism>
<keyword id="KW-0227">DNA damage</keyword>
<keyword id="KW-0234">DNA repair</keyword>
<keyword id="KW-0255">Endonuclease</keyword>
<keyword id="KW-0378">Hydrolase</keyword>
<keyword id="KW-0479">Metal-binding</keyword>
<keyword id="KW-0540">Nuclease</keyword>
<keyword id="KW-1185">Reference proteome</keyword>
<keyword id="KW-0862">Zinc</keyword>